<accession>Q89AB5</accession>
<gene>
    <name type="ordered locus">bbp_402</name>
</gene>
<reference key="1">
    <citation type="journal article" date="2003" name="Proc. Natl. Acad. Sci. U.S.A.">
        <title>Reductive genome evolution in Buchnera aphidicola.</title>
        <authorList>
            <person name="van Ham R.C.H.J."/>
            <person name="Kamerbeek J."/>
            <person name="Palacios C."/>
            <person name="Rausell C."/>
            <person name="Abascal F."/>
            <person name="Bastolla U."/>
            <person name="Fernandez J.M."/>
            <person name="Jimenez L."/>
            <person name="Postigo M."/>
            <person name="Silva F.J."/>
            <person name="Tamames J."/>
            <person name="Viguera E."/>
            <person name="Latorre A."/>
            <person name="Valencia A."/>
            <person name="Moran F."/>
            <person name="Moya A."/>
        </authorList>
    </citation>
    <scope>NUCLEOTIDE SEQUENCE [LARGE SCALE GENOMIC DNA]</scope>
    <source>
        <strain>Bp</strain>
    </source>
</reference>
<comment type="subcellular location">
    <subcellularLocation>
        <location evidence="2">Cell membrane</location>
        <topology evidence="2">Multi-pass membrane protein</topology>
    </subcellularLocation>
</comment>
<comment type="similarity">
    <text evidence="2">Belongs to the MscS (TC 1.A.23) family.</text>
</comment>
<protein>
    <recommendedName>
        <fullName>Uncharacterized MscS family protein bbp_402</fullName>
    </recommendedName>
</protein>
<name>Y402_BUCBP</name>
<feature type="chain" id="PRO_0000110248" description="Uncharacterized MscS family protein bbp_402">
    <location>
        <begin position="1"/>
        <end position="281"/>
    </location>
</feature>
<feature type="transmembrane region" description="Helical" evidence="1">
    <location>
        <begin position="23"/>
        <end position="45"/>
    </location>
</feature>
<feature type="transmembrane region" description="Helical" evidence="1">
    <location>
        <begin position="65"/>
        <end position="87"/>
    </location>
</feature>
<feature type="transmembrane region" description="Helical" evidence="1">
    <location>
        <begin position="94"/>
        <end position="116"/>
    </location>
</feature>
<sequence length="281" mass="31337">MTQLNVVNDINHAGNWLIRNQELLLSYIINLISSIIILIIGFFAAKIISNLINKVLITQKIDTTIANFLAALVRYIIITFALIASLGCIGVQTTSVIAILGAAGMAIGLALQGSLSNFAAGVLLVILRPFRTGEYVNLEKISGTVLNIHVFYTTFRTLDGKIVVIPNGKIISGNIINYSREKARRNEFIIGVSYDSDIDKVIKILKNVVKNEKRVLKDRDIIVGLSELAPSSLNFIVRCWSHTDDINIVYWDLMVKFKKALDSNNINIPYPQFDINLKKKY</sequence>
<keyword id="KW-1003">Cell membrane</keyword>
<keyword id="KW-0472">Membrane</keyword>
<keyword id="KW-1185">Reference proteome</keyword>
<keyword id="KW-0812">Transmembrane</keyword>
<keyword id="KW-1133">Transmembrane helix</keyword>
<evidence type="ECO:0000255" key="1"/>
<evidence type="ECO:0000305" key="2"/>
<dbReference type="EMBL" id="AE016826">
    <property type="protein sequence ID" value="AAO27114.1"/>
    <property type="molecule type" value="Genomic_DNA"/>
</dbReference>
<dbReference type="RefSeq" id="WP_011091515.1">
    <property type="nucleotide sequence ID" value="NC_004545.1"/>
</dbReference>
<dbReference type="SMR" id="Q89AB5"/>
<dbReference type="STRING" id="224915.bbp_402"/>
<dbReference type="KEGG" id="bab:bbp_402"/>
<dbReference type="eggNOG" id="COG0668">
    <property type="taxonomic scope" value="Bacteria"/>
</dbReference>
<dbReference type="HOGENOM" id="CLU_037945_1_1_6"/>
<dbReference type="OrthoDB" id="9809206at2"/>
<dbReference type="Proteomes" id="UP000000601">
    <property type="component" value="Chromosome"/>
</dbReference>
<dbReference type="GO" id="GO:0005886">
    <property type="term" value="C:plasma membrane"/>
    <property type="evidence" value="ECO:0007669"/>
    <property type="project" value="UniProtKB-SubCell"/>
</dbReference>
<dbReference type="GO" id="GO:0008381">
    <property type="term" value="F:mechanosensitive monoatomic ion channel activity"/>
    <property type="evidence" value="ECO:0007669"/>
    <property type="project" value="InterPro"/>
</dbReference>
<dbReference type="Gene3D" id="1.10.287.1260">
    <property type="match status" value="1"/>
</dbReference>
<dbReference type="Gene3D" id="2.30.30.60">
    <property type="match status" value="1"/>
</dbReference>
<dbReference type="Gene3D" id="3.30.70.100">
    <property type="match status" value="1"/>
</dbReference>
<dbReference type="InterPro" id="IPR010920">
    <property type="entry name" value="LSM_dom_sf"/>
</dbReference>
<dbReference type="InterPro" id="IPR049142">
    <property type="entry name" value="MS_channel_1st"/>
</dbReference>
<dbReference type="InterPro" id="IPR049278">
    <property type="entry name" value="MS_channel_C"/>
</dbReference>
<dbReference type="InterPro" id="IPR008910">
    <property type="entry name" value="MSC_TM_helix"/>
</dbReference>
<dbReference type="InterPro" id="IPR045275">
    <property type="entry name" value="MscS_archaea/bacteria_type"/>
</dbReference>
<dbReference type="InterPro" id="IPR023408">
    <property type="entry name" value="MscS_beta-dom_sf"/>
</dbReference>
<dbReference type="InterPro" id="IPR006685">
    <property type="entry name" value="MscS_channel_2nd"/>
</dbReference>
<dbReference type="InterPro" id="IPR011066">
    <property type="entry name" value="MscS_channel_C_sf"/>
</dbReference>
<dbReference type="InterPro" id="IPR006686">
    <property type="entry name" value="MscS_channel_CS"/>
</dbReference>
<dbReference type="InterPro" id="IPR011014">
    <property type="entry name" value="MscS_channel_TM-2"/>
</dbReference>
<dbReference type="NCBIfam" id="NF007662">
    <property type="entry name" value="PRK10334.1"/>
    <property type="match status" value="1"/>
</dbReference>
<dbReference type="PANTHER" id="PTHR30221">
    <property type="entry name" value="SMALL-CONDUCTANCE MECHANOSENSITIVE CHANNEL"/>
    <property type="match status" value="1"/>
</dbReference>
<dbReference type="PANTHER" id="PTHR30221:SF1">
    <property type="entry name" value="SMALL-CONDUCTANCE MECHANOSENSITIVE CHANNEL"/>
    <property type="match status" value="1"/>
</dbReference>
<dbReference type="Pfam" id="PF21088">
    <property type="entry name" value="MS_channel_1st"/>
    <property type="match status" value="1"/>
</dbReference>
<dbReference type="Pfam" id="PF05552">
    <property type="entry name" value="MS_channel_1st_1"/>
    <property type="match status" value="1"/>
</dbReference>
<dbReference type="Pfam" id="PF00924">
    <property type="entry name" value="MS_channel_2nd"/>
    <property type="match status" value="1"/>
</dbReference>
<dbReference type="Pfam" id="PF21082">
    <property type="entry name" value="MS_channel_3rd"/>
    <property type="match status" value="1"/>
</dbReference>
<dbReference type="SUPFAM" id="SSF82689">
    <property type="entry name" value="Mechanosensitive channel protein MscS (YggB), C-terminal domain"/>
    <property type="match status" value="1"/>
</dbReference>
<dbReference type="SUPFAM" id="SSF82861">
    <property type="entry name" value="Mechanosensitive channel protein MscS (YggB), transmembrane region"/>
    <property type="match status" value="1"/>
</dbReference>
<dbReference type="SUPFAM" id="SSF50182">
    <property type="entry name" value="Sm-like ribonucleoproteins"/>
    <property type="match status" value="1"/>
</dbReference>
<dbReference type="PROSITE" id="PS01246">
    <property type="entry name" value="UPF0003"/>
    <property type="match status" value="1"/>
</dbReference>
<proteinExistence type="inferred from homology"/>
<organism>
    <name type="scientific">Buchnera aphidicola subsp. Baizongia pistaciae (strain Bp)</name>
    <dbReference type="NCBI Taxonomy" id="224915"/>
    <lineage>
        <taxon>Bacteria</taxon>
        <taxon>Pseudomonadati</taxon>
        <taxon>Pseudomonadota</taxon>
        <taxon>Gammaproteobacteria</taxon>
        <taxon>Enterobacterales</taxon>
        <taxon>Erwiniaceae</taxon>
        <taxon>Buchnera</taxon>
    </lineage>
</organism>